<comment type="function">
    <text evidence="1">Catalyzes the attachment of tryptophan to tRNA(Trp).</text>
</comment>
<comment type="catalytic activity">
    <reaction evidence="1">
        <text>tRNA(Trp) + L-tryptophan + ATP = L-tryptophyl-tRNA(Trp) + AMP + diphosphate + H(+)</text>
        <dbReference type="Rhea" id="RHEA:24080"/>
        <dbReference type="Rhea" id="RHEA-COMP:9671"/>
        <dbReference type="Rhea" id="RHEA-COMP:9705"/>
        <dbReference type="ChEBI" id="CHEBI:15378"/>
        <dbReference type="ChEBI" id="CHEBI:30616"/>
        <dbReference type="ChEBI" id="CHEBI:33019"/>
        <dbReference type="ChEBI" id="CHEBI:57912"/>
        <dbReference type="ChEBI" id="CHEBI:78442"/>
        <dbReference type="ChEBI" id="CHEBI:78535"/>
        <dbReference type="ChEBI" id="CHEBI:456215"/>
        <dbReference type="EC" id="6.1.1.2"/>
    </reaction>
</comment>
<comment type="subunit">
    <text evidence="1">Homodimer.</text>
</comment>
<comment type="subcellular location">
    <subcellularLocation>
        <location evidence="1">Cytoplasm</location>
    </subcellularLocation>
</comment>
<comment type="similarity">
    <text evidence="1">Belongs to the class-I aminoacyl-tRNA synthetase family.</text>
</comment>
<protein>
    <recommendedName>
        <fullName evidence="1">Tryptophan--tRNA ligase</fullName>
        <ecNumber evidence="1">6.1.1.2</ecNumber>
    </recommendedName>
    <alternativeName>
        <fullName evidence="1">Tryptophanyl-tRNA synthetase</fullName>
        <shortName evidence="1">TrpRS</shortName>
    </alternativeName>
</protein>
<sequence length="338" mass="38463">MTNKKRILSGVQPTGDLHIGNWLGAINNWVELQEKHETFLCVVDLHAITTEYDTKQLSKNTLSTAALYIACGINPKICSIFVQSQISAHSELCWILNCMTPINWMERMIQFKEKSIQQGNNVSIGLFDYPILMAADILLYDADYVPVGEDQKQHLELAKDIAQQRINAKFGKEENILKIPQPIIMKKGSKIMSLNDGSKKMSKSDINEGSRINLLDTPEIITKKIKRAKSDSYMGMEFNNPERPESRNLLMIYSLLSGKEVSELENDLSQTGWGTFKKIFTEQIIESLKPIQERYQVLINDPHELNKILIQGKEKAEVVANKTLSRVKSELGFFEIEK</sequence>
<accession>Q7V286</accession>
<reference key="1">
    <citation type="journal article" date="2003" name="Nature">
        <title>Genome divergence in two Prochlorococcus ecotypes reflects oceanic niche differentiation.</title>
        <authorList>
            <person name="Rocap G."/>
            <person name="Larimer F.W."/>
            <person name="Lamerdin J.E."/>
            <person name="Malfatti S."/>
            <person name="Chain P."/>
            <person name="Ahlgren N.A."/>
            <person name="Arellano A."/>
            <person name="Coleman M."/>
            <person name="Hauser L."/>
            <person name="Hess W.R."/>
            <person name="Johnson Z.I."/>
            <person name="Land M.L."/>
            <person name="Lindell D."/>
            <person name="Post A.F."/>
            <person name="Regala W."/>
            <person name="Shah M."/>
            <person name="Shaw S.L."/>
            <person name="Steglich C."/>
            <person name="Sullivan M.B."/>
            <person name="Ting C.S."/>
            <person name="Tolonen A."/>
            <person name="Webb E.A."/>
            <person name="Zinser E.R."/>
            <person name="Chisholm S.W."/>
        </authorList>
    </citation>
    <scope>NUCLEOTIDE SEQUENCE [LARGE SCALE GENOMIC DNA]</scope>
    <source>
        <strain>CCMP1986 / NIES-2087 / MED4</strain>
    </source>
</reference>
<organism>
    <name type="scientific">Prochlorococcus marinus subsp. pastoris (strain CCMP1986 / NIES-2087 / MED4)</name>
    <dbReference type="NCBI Taxonomy" id="59919"/>
    <lineage>
        <taxon>Bacteria</taxon>
        <taxon>Bacillati</taxon>
        <taxon>Cyanobacteriota</taxon>
        <taxon>Cyanophyceae</taxon>
        <taxon>Synechococcales</taxon>
        <taxon>Prochlorococcaceae</taxon>
        <taxon>Prochlorococcus</taxon>
    </lineage>
</organism>
<proteinExistence type="inferred from homology"/>
<keyword id="KW-0030">Aminoacyl-tRNA synthetase</keyword>
<keyword id="KW-0067">ATP-binding</keyword>
<keyword id="KW-0963">Cytoplasm</keyword>
<keyword id="KW-0436">Ligase</keyword>
<keyword id="KW-0547">Nucleotide-binding</keyword>
<keyword id="KW-0648">Protein biosynthesis</keyword>
<evidence type="ECO:0000255" key="1">
    <source>
        <dbReference type="HAMAP-Rule" id="MF_00140"/>
    </source>
</evidence>
<dbReference type="EC" id="6.1.1.2" evidence="1"/>
<dbReference type="EMBL" id="BX548174">
    <property type="protein sequence ID" value="CAE19057.1"/>
    <property type="molecule type" value="Genomic_DNA"/>
</dbReference>
<dbReference type="RefSeq" id="WP_011132232.1">
    <property type="nucleotide sequence ID" value="NC_005072.1"/>
</dbReference>
<dbReference type="SMR" id="Q7V286"/>
<dbReference type="STRING" id="59919.PMM0598"/>
<dbReference type="KEGG" id="pmm:PMM0598"/>
<dbReference type="eggNOG" id="COG0180">
    <property type="taxonomic scope" value="Bacteria"/>
</dbReference>
<dbReference type="HOGENOM" id="CLU_029244_1_4_3"/>
<dbReference type="OrthoDB" id="9801042at2"/>
<dbReference type="Proteomes" id="UP000001026">
    <property type="component" value="Chromosome"/>
</dbReference>
<dbReference type="GO" id="GO:0005737">
    <property type="term" value="C:cytoplasm"/>
    <property type="evidence" value="ECO:0007669"/>
    <property type="project" value="UniProtKB-SubCell"/>
</dbReference>
<dbReference type="GO" id="GO:0005524">
    <property type="term" value="F:ATP binding"/>
    <property type="evidence" value="ECO:0007669"/>
    <property type="project" value="UniProtKB-UniRule"/>
</dbReference>
<dbReference type="GO" id="GO:0004830">
    <property type="term" value="F:tryptophan-tRNA ligase activity"/>
    <property type="evidence" value="ECO:0007669"/>
    <property type="project" value="UniProtKB-UniRule"/>
</dbReference>
<dbReference type="GO" id="GO:0006436">
    <property type="term" value="P:tryptophanyl-tRNA aminoacylation"/>
    <property type="evidence" value="ECO:0007669"/>
    <property type="project" value="UniProtKB-UniRule"/>
</dbReference>
<dbReference type="CDD" id="cd00806">
    <property type="entry name" value="TrpRS_core"/>
    <property type="match status" value="1"/>
</dbReference>
<dbReference type="FunFam" id="1.10.240.10:FF:000002">
    <property type="entry name" value="Tryptophan--tRNA ligase"/>
    <property type="match status" value="1"/>
</dbReference>
<dbReference type="Gene3D" id="3.40.50.620">
    <property type="entry name" value="HUPs"/>
    <property type="match status" value="1"/>
</dbReference>
<dbReference type="Gene3D" id="1.10.240.10">
    <property type="entry name" value="Tyrosyl-Transfer RNA Synthetase"/>
    <property type="match status" value="1"/>
</dbReference>
<dbReference type="HAMAP" id="MF_00140_B">
    <property type="entry name" value="Trp_tRNA_synth_B"/>
    <property type="match status" value="1"/>
</dbReference>
<dbReference type="InterPro" id="IPR002305">
    <property type="entry name" value="aa-tRNA-synth_Ic"/>
</dbReference>
<dbReference type="InterPro" id="IPR014729">
    <property type="entry name" value="Rossmann-like_a/b/a_fold"/>
</dbReference>
<dbReference type="InterPro" id="IPR002306">
    <property type="entry name" value="Trp-tRNA-ligase"/>
</dbReference>
<dbReference type="InterPro" id="IPR024109">
    <property type="entry name" value="Trp-tRNA-ligase_bac-type"/>
</dbReference>
<dbReference type="InterPro" id="IPR050203">
    <property type="entry name" value="Trp-tRNA_synthetase"/>
</dbReference>
<dbReference type="NCBIfam" id="TIGR00233">
    <property type="entry name" value="trpS"/>
    <property type="match status" value="1"/>
</dbReference>
<dbReference type="PANTHER" id="PTHR43766">
    <property type="entry name" value="TRYPTOPHAN--TRNA LIGASE, MITOCHONDRIAL"/>
    <property type="match status" value="1"/>
</dbReference>
<dbReference type="PANTHER" id="PTHR43766:SF1">
    <property type="entry name" value="TRYPTOPHAN--TRNA LIGASE, MITOCHONDRIAL"/>
    <property type="match status" value="1"/>
</dbReference>
<dbReference type="Pfam" id="PF00579">
    <property type="entry name" value="tRNA-synt_1b"/>
    <property type="match status" value="1"/>
</dbReference>
<dbReference type="PRINTS" id="PR01039">
    <property type="entry name" value="TRNASYNTHTRP"/>
</dbReference>
<dbReference type="SUPFAM" id="SSF52374">
    <property type="entry name" value="Nucleotidylyl transferase"/>
    <property type="match status" value="1"/>
</dbReference>
<feature type="chain" id="PRO_0000136661" description="Tryptophan--tRNA ligase">
    <location>
        <begin position="1"/>
        <end position="338"/>
    </location>
</feature>
<feature type="short sequence motif" description="'HIGH' region" evidence="1">
    <location>
        <begin position="13"/>
        <end position="21"/>
    </location>
</feature>
<feature type="short sequence motif" description="'KMSKS' region" evidence="1">
    <location>
        <begin position="200"/>
        <end position="204"/>
    </location>
</feature>
<feature type="binding site" evidence="1">
    <location>
        <begin position="12"/>
        <end position="14"/>
    </location>
    <ligand>
        <name>ATP</name>
        <dbReference type="ChEBI" id="CHEBI:30616"/>
    </ligand>
</feature>
<feature type="binding site" evidence="1">
    <location>
        <begin position="20"/>
        <end position="21"/>
    </location>
    <ligand>
        <name>ATP</name>
        <dbReference type="ChEBI" id="CHEBI:30616"/>
    </ligand>
</feature>
<feature type="binding site" evidence="1">
    <location>
        <position position="136"/>
    </location>
    <ligand>
        <name>L-tryptophan</name>
        <dbReference type="ChEBI" id="CHEBI:57912"/>
    </ligand>
</feature>
<feature type="binding site" evidence="1">
    <location>
        <begin position="148"/>
        <end position="150"/>
    </location>
    <ligand>
        <name>ATP</name>
        <dbReference type="ChEBI" id="CHEBI:30616"/>
    </ligand>
</feature>
<feature type="binding site" evidence="1">
    <location>
        <position position="191"/>
    </location>
    <ligand>
        <name>ATP</name>
        <dbReference type="ChEBI" id="CHEBI:30616"/>
    </ligand>
</feature>
<feature type="binding site" evidence="1">
    <location>
        <begin position="200"/>
        <end position="204"/>
    </location>
    <ligand>
        <name>ATP</name>
        <dbReference type="ChEBI" id="CHEBI:30616"/>
    </ligand>
</feature>
<gene>
    <name evidence="1" type="primary">trpS</name>
    <name type="ordered locus">PMM0598</name>
</gene>
<name>SYW_PROMP</name>